<name>FLVC2_RAT</name>
<reference key="1">
    <citation type="journal article" date="2004" name="Exp. Cell Res.">
        <title>Novel hexad repeats conserved in a putative transporter with restricted expression in cell types associated with growth, calcium exchange and homeostasis.</title>
        <authorList>
            <person name="Brasier G."/>
            <person name="Tikellis C."/>
            <person name="Xuereb L."/>
            <person name="Craigie J."/>
            <person name="Casley D."/>
            <person name="Kovacs C.S."/>
            <person name="Fudge N.J."/>
            <person name="Kalnins R."/>
            <person name="Cooper M.E."/>
            <person name="Wookey P.J."/>
        </authorList>
    </citation>
    <scope>NUCLEOTIDE SEQUENCE [MRNA]</scope>
    <scope>DEVELOPMENTAL STAGE</scope>
    <source>
        <tissue>Kidney</tissue>
    </source>
</reference>
<accession>P60815</accession>
<feature type="chain" id="PRO_0000084848" description="Choline/ethanolamine transporter FLVCR2">
    <location>
        <begin position="1"/>
        <end position="546"/>
    </location>
</feature>
<feature type="topological domain" description="Cytoplasmic" evidence="1">
    <location>
        <begin position="1"/>
        <end position="93"/>
    </location>
</feature>
<feature type="transmembrane region" description="Helical; Name=TM1" evidence="1">
    <location>
        <begin position="94"/>
        <end position="118"/>
    </location>
</feature>
<feature type="topological domain" description="Extracellular" evidence="1">
    <location>
        <begin position="119"/>
        <end position="136"/>
    </location>
</feature>
<feature type="transmembrane region" description="Helical; Name=TM2" evidence="1">
    <location>
        <begin position="137"/>
        <end position="164"/>
    </location>
</feature>
<feature type="topological domain" description="Cytoplasmic" evidence="1">
    <location>
        <begin position="165"/>
        <end position="166"/>
    </location>
</feature>
<feature type="transmembrane region" description="Helical; Name=TM3" evidence="1">
    <location>
        <begin position="167"/>
        <end position="186"/>
    </location>
</feature>
<feature type="topological domain" description="Extracellular" evidence="1">
    <location>
        <begin position="187"/>
        <end position="193"/>
    </location>
</feature>
<feature type="transmembrane region" description="Helical; Name=TM4" evidence="1">
    <location>
        <begin position="194"/>
        <end position="222"/>
    </location>
</feature>
<feature type="topological domain" description="Cytoplasmic" evidence="1">
    <location>
        <begin position="223"/>
        <end position="227"/>
    </location>
</feature>
<feature type="transmembrane region" description="Helical; Name=TM5" evidence="1">
    <location>
        <begin position="228"/>
        <end position="253"/>
    </location>
</feature>
<feature type="topological domain" description="Extracellular" evidence="1">
    <location>
        <begin position="254"/>
        <end position="258"/>
    </location>
</feature>
<feature type="transmembrane region" description="Helical; Name=TM6" evidence="1">
    <location>
        <begin position="259"/>
        <end position="288"/>
    </location>
</feature>
<feature type="topological domain" description="Cytoplasmic" evidence="1">
    <location>
        <begin position="289"/>
        <end position="324"/>
    </location>
</feature>
<feature type="transmembrane region" description="Helical; Name=TM7" evidence="1">
    <location>
        <begin position="325"/>
        <end position="355"/>
    </location>
</feature>
<feature type="topological domain" description="Extracellular" evidence="1 6">
    <location>
        <begin position="356"/>
        <end position="359"/>
    </location>
</feature>
<feature type="transmembrane region" description="Helical; Name=TM8" evidence="1">
    <location>
        <begin position="360"/>
        <end position="388"/>
    </location>
</feature>
<feature type="topological domain" description="Cytoplasmic" evidence="1">
    <location>
        <begin position="389"/>
        <end position="390"/>
    </location>
</feature>
<feature type="transmembrane region" description="Helical; Name=TM9" evidence="1">
    <location>
        <begin position="391"/>
        <end position="413"/>
    </location>
</feature>
<feature type="topological domain" description="Extracellular" evidence="1 6">
    <location>
        <begin position="414"/>
        <end position="416"/>
    </location>
</feature>
<feature type="transmembrane region" description="Helical; Name=TM10" evidence="1">
    <location>
        <begin position="417"/>
        <end position="446"/>
    </location>
</feature>
<feature type="topological domain" description="Cytoplasmic" evidence="1 6">
    <location>
        <begin position="447"/>
        <end position="454"/>
    </location>
</feature>
<feature type="transmembrane region" description="Helical; Name=TM11" evidence="1">
    <location>
        <begin position="455"/>
        <end position="480"/>
    </location>
</feature>
<feature type="topological domain" description="Extracellular" evidence="1">
    <location>
        <begin position="481"/>
        <end position="482"/>
    </location>
</feature>
<feature type="transmembrane region" description="Helical; Name=TM12" evidence="1">
    <location>
        <begin position="483"/>
        <end position="505"/>
    </location>
</feature>
<feature type="topological domain" description="Cytoplasmic" evidence="1">
    <location>
        <begin position="506"/>
        <end position="546"/>
    </location>
</feature>
<feature type="repeat" description="1">
    <location>
        <begin position="31"/>
        <end position="36"/>
    </location>
</feature>
<feature type="repeat" description="2">
    <location>
        <begin position="37"/>
        <end position="42"/>
    </location>
</feature>
<feature type="repeat" description="3">
    <location>
        <begin position="43"/>
        <end position="48"/>
    </location>
</feature>
<feature type="repeat" description="4">
    <location>
        <begin position="49"/>
        <end position="54"/>
    </location>
</feature>
<feature type="repeat" description="5">
    <location>
        <begin position="55"/>
        <end position="60"/>
    </location>
</feature>
<feature type="repeat" description="6">
    <location>
        <begin position="61"/>
        <end position="66"/>
    </location>
</feature>
<feature type="repeat" description="7">
    <location>
        <begin position="67"/>
        <end position="72"/>
    </location>
</feature>
<feature type="repeat" description="8; approximate">
    <location>
        <begin position="73"/>
        <end position="78"/>
    </location>
</feature>
<feature type="repeat" description="9; approximate">
    <location>
        <begin position="79"/>
        <end position="84"/>
    </location>
</feature>
<feature type="region of interest" description="Disordered" evidence="4">
    <location>
        <begin position="1"/>
        <end position="84"/>
    </location>
</feature>
<feature type="region of interest" description="9 X 6 AA tandem repeats of P-S-[VS]-S-[VIAG]-[HD]">
    <location>
        <begin position="31"/>
        <end position="84"/>
    </location>
</feature>
<feature type="region of interest" description="Disordered" evidence="4">
    <location>
        <begin position="511"/>
        <end position="546"/>
    </location>
</feature>
<feature type="compositionally biased region" description="Polar residues" evidence="4">
    <location>
        <begin position="22"/>
        <end position="49"/>
    </location>
</feature>
<feature type="compositionally biased region" description="Low complexity" evidence="4">
    <location>
        <begin position="54"/>
        <end position="74"/>
    </location>
</feature>
<feature type="compositionally biased region" description="Basic and acidic residues" evidence="4">
    <location>
        <begin position="511"/>
        <end position="523"/>
    </location>
</feature>
<feature type="binding site" evidence="1">
    <location>
        <position position="115"/>
    </location>
    <ligand>
        <name>choline</name>
        <dbReference type="ChEBI" id="CHEBI:15354"/>
    </ligand>
</feature>
<feature type="binding site" evidence="1">
    <location>
        <position position="116"/>
    </location>
    <ligand>
        <name>choline</name>
        <dbReference type="ChEBI" id="CHEBI:15354"/>
    </ligand>
</feature>
<feature type="binding site" evidence="1">
    <location>
        <position position="119"/>
    </location>
    <ligand>
        <name>choline</name>
        <dbReference type="ChEBI" id="CHEBI:15354"/>
    </ligand>
</feature>
<feature type="binding site" evidence="1">
    <location>
        <position position="212"/>
    </location>
    <ligand>
        <name>choline</name>
        <dbReference type="ChEBI" id="CHEBI:15354"/>
    </ligand>
</feature>
<feature type="binding site" evidence="1">
    <location>
        <position position="342"/>
    </location>
    <ligand>
        <name>choline</name>
        <dbReference type="ChEBI" id="CHEBI:15354"/>
    </ligand>
</feature>
<feature type="binding site" evidence="1">
    <location>
        <position position="464"/>
    </location>
    <ligand>
        <name>choline</name>
        <dbReference type="ChEBI" id="CHEBI:15354"/>
    </ligand>
</feature>
<feature type="modified residue" description="Phosphoserine" evidence="1">
    <location>
        <position position="535"/>
    </location>
</feature>
<proteinExistence type="evidence at protein level"/>
<dbReference type="EMBL" id="AY260573">
    <property type="protein sequence ID" value="AAP86634.1"/>
    <property type="molecule type" value="mRNA"/>
</dbReference>
<dbReference type="SMR" id="P60815"/>
<dbReference type="FunCoup" id="P60815">
    <property type="interactions" value="603"/>
</dbReference>
<dbReference type="STRING" id="10116.ENSRNOP00000073434"/>
<dbReference type="PhosphoSitePlus" id="P60815"/>
<dbReference type="PaxDb" id="10116-ENSRNOP00000011599"/>
<dbReference type="UCSC" id="RGD:735098">
    <property type="organism name" value="rat"/>
</dbReference>
<dbReference type="AGR" id="RGD:735098"/>
<dbReference type="RGD" id="735098">
    <property type="gene designation" value="Flvcr2"/>
</dbReference>
<dbReference type="eggNOG" id="KOG2563">
    <property type="taxonomic scope" value="Eukaryota"/>
</dbReference>
<dbReference type="InParanoid" id="P60815"/>
<dbReference type="PhylomeDB" id="P60815"/>
<dbReference type="ChiTaRS" id="Flvcr2">
    <property type="organism name" value="rat"/>
</dbReference>
<dbReference type="PRO" id="PR:P60815"/>
<dbReference type="Proteomes" id="UP000002494">
    <property type="component" value="Unplaced"/>
</dbReference>
<dbReference type="GO" id="GO:0005789">
    <property type="term" value="C:endoplasmic reticulum membrane"/>
    <property type="evidence" value="ECO:0000250"/>
    <property type="project" value="UniProtKB"/>
</dbReference>
<dbReference type="GO" id="GO:0016020">
    <property type="term" value="C:membrane"/>
    <property type="evidence" value="ECO:0000318"/>
    <property type="project" value="GO_Central"/>
</dbReference>
<dbReference type="GO" id="GO:0031966">
    <property type="term" value="C:mitochondrial membrane"/>
    <property type="evidence" value="ECO:0000250"/>
    <property type="project" value="UniProtKB"/>
</dbReference>
<dbReference type="GO" id="GO:0005886">
    <property type="term" value="C:plasma membrane"/>
    <property type="evidence" value="ECO:0000250"/>
    <property type="project" value="UniProtKB"/>
</dbReference>
<dbReference type="GO" id="GO:0033265">
    <property type="term" value="F:choline binding"/>
    <property type="evidence" value="ECO:0000266"/>
    <property type="project" value="RGD"/>
</dbReference>
<dbReference type="GO" id="GO:0015220">
    <property type="term" value="F:choline transmembrane transporter activity"/>
    <property type="evidence" value="ECO:0000250"/>
    <property type="project" value="UniProtKB"/>
</dbReference>
<dbReference type="GO" id="GO:0034228">
    <property type="term" value="F:ethanolamine transmembrane transporter activity"/>
    <property type="evidence" value="ECO:0000250"/>
    <property type="project" value="UniProtKB"/>
</dbReference>
<dbReference type="GO" id="GO:0020037">
    <property type="term" value="F:heme binding"/>
    <property type="evidence" value="ECO:0000250"/>
    <property type="project" value="UniProtKB"/>
</dbReference>
<dbReference type="GO" id="GO:0015232">
    <property type="term" value="F:heme transmembrane transporter activity"/>
    <property type="evidence" value="ECO:0000250"/>
    <property type="project" value="UniProtKB"/>
</dbReference>
<dbReference type="GO" id="GO:0007420">
    <property type="term" value="P:brain development"/>
    <property type="evidence" value="ECO:0000266"/>
    <property type="project" value="RGD"/>
</dbReference>
<dbReference type="GO" id="GO:0015871">
    <property type="term" value="P:choline transport"/>
    <property type="evidence" value="ECO:0000250"/>
    <property type="project" value="UniProtKB"/>
</dbReference>
<dbReference type="GO" id="GO:0097102">
    <property type="term" value="P:endothelial tip cell fate specification"/>
    <property type="evidence" value="ECO:0000266"/>
    <property type="project" value="RGD"/>
</dbReference>
<dbReference type="GO" id="GO:0010467">
    <property type="term" value="P:gene expression"/>
    <property type="evidence" value="ECO:0000266"/>
    <property type="project" value="RGD"/>
</dbReference>
<dbReference type="GO" id="GO:0097037">
    <property type="term" value="P:heme export"/>
    <property type="evidence" value="ECO:0000318"/>
    <property type="project" value="GO_Central"/>
</dbReference>
<dbReference type="GO" id="GO:0001701">
    <property type="term" value="P:in utero embryonic development"/>
    <property type="evidence" value="ECO:0000266"/>
    <property type="project" value="RGD"/>
</dbReference>
<dbReference type="GO" id="GO:0002040">
    <property type="term" value="P:sprouting angiogenesis"/>
    <property type="evidence" value="ECO:0000266"/>
    <property type="project" value="RGD"/>
</dbReference>
<dbReference type="GO" id="GO:0150104">
    <property type="term" value="P:transport across blood-brain barrier"/>
    <property type="evidence" value="ECO:0000250"/>
    <property type="project" value="UniProtKB"/>
</dbReference>
<dbReference type="FunFam" id="1.20.1250.20:FF:000101">
    <property type="entry name" value="feline leukemia virus subgroup C receptor-related protein 2"/>
    <property type="match status" value="1"/>
</dbReference>
<dbReference type="FunFam" id="1.20.1250.20:FF:000092">
    <property type="entry name" value="Feline leukemia virus subgroup C receptor-related protein 2 isoform 1"/>
    <property type="match status" value="1"/>
</dbReference>
<dbReference type="Gene3D" id="1.20.1250.20">
    <property type="entry name" value="MFS general substrate transporter like domains"/>
    <property type="match status" value="2"/>
</dbReference>
<dbReference type="InterPro" id="IPR049680">
    <property type="entry name" value="FLVCR1-2_SLC49-like"/>
</dbReference>
<dbReference type="InterPro" id="IPR011701">
    <property type="entry name" value="MFS"/>
</dbReference>
<dbReference type="InterPro" id="IPR020846">
    <property type="entry name" value="MFS_dom"/>
</dbReference>
<dbReference type="InterPro" id="IPR036259">
    <property type="entry name" value="MFS_trans_sf"/>
</dbReference>
<dbReference type="PANTHER" id="PTHR10924:SF3">
    <property type="entry name" value="HEME TRANSPORTER FLVCR2"/>
    <property type="match status" value="1"/>
</dbReference>
<dbReference type="PANTHER" id="PTHR10924">
    <property type="entry name" value="MAJOR FACILITATOR SUPERFAMILY PROTEIN-RELATED"/>
    <property type="match status" value="1"/>
</dbReference>
<dbReference type="Pfam" id="PF07690">
    <property type="entry name" value="MFS_1"/>
    <property type="match status" value="1"/>
</dbReference>
<dbReference type="SUPFAM" id="SSF103473">
    <property type="entry name" value="MFS general substrate transporter"/>
    <property type="match status" value="1"/>
</dbReference>
<dbReference type="PROSITE" id="PS50850">
    <property type="entry name" value="MFS"/>
    <property type="match status" value="1"/>
</dbReference>
<evidence type="ECO:0000250" key="1">
    <source>
        <dbReference type="UniProtKB" id="Q91X85"/>
    </source>
</evidence>
<evidence type="ECO:0000250" key="2">
    <source>
        <dbReference type="UniProtKB" id="Q9UPI3"/>
    </source>
</evidence>
<evidence type="ECO:0000255" key="3"/>
<evidence type="ECO:0000256" key="4">
    <source>
        <dbReference type="SAM" id="MobiDB-lite"/>
    </source>
</evidence>
<evidence type="ECO:0000269" key="5">
    <source>
    </source>
</evidence>
<evidence type="ECO:0000305" key="6"/>
<sequence>MVNESLNQEESNDRPVPESEFQADTSYSTQPSVSIHPSVSGHPSVSIHPSVSGHPSVSIDPSVSVHPSSSAHPSTLAQPSGLTHPNELVKEDSVIKVSKRRWAVVLVFSCYSLCNAFQWIQYGSINNIFMNFYGVSAFAIDWLSMCYMLTYIPLLLPVAWMLEKFGLRTIAITGSALNCLGAWVKLGSLEPHLFPVTMVGQVICSVAQVFILGMPSRIASVWFGANEVSTACSMAVFGNQLGIAIGFLVPPVLVPNIKDQEKLAYHISIMFYIIGGVATLLFILVIIVFKEKPKYPPSRAQSLSYALATTDASYLSSIVRLFKNLNFVLLVITYGLNAGAFYALSTLLNRMVIMHFPGQEVNAGRIGLTIVIAGMFGAMISGIWLDKSKTYKETTLVVYIMTLVGMVVYTFTLNLNHLWIVFITADSLGFFMTGYLPLGFEFAVELTYPESEGVSSGLLNVSAQVFGIIFTISQGQIIDNYGSVPGNIFLCVFLALGSALTAFIKSDLRRQRANKDAPETKVQEEEEEEEESNTSKVPTVLSEAHL</sequence>
<protein>
    <recommendedName>
        <fullName evidence="6">Choline/ethanolamine transporter FLVCR2</fullName>
    </recommendedName>
    <alternativeName>
        <fullName evidence="2">Calcium-chelate transporter</fullName>
        <shortName evidence="2">CCT</shortName>
    </alternativeName>
    <alternativeName>
        <fullName>Feline leukemia virus subgroup C receptor-related protein 2</fullName>
    </alternativeName>
    <alternativeName>
        <fullName evidence="2">Heme transporter FLVCR2</fullName>
    </alternativeName>
</protein>
<organism>
    <name type="scientific">Rattus norvegicus</name>
    <name type="common">Rat</name>
    <dbReference type="NCBI Taxonomy" id="10116"/>
    <lineage>
        <taxon>Eukaryota</taxon>
        <taxon>Metazoa</taxon>
        <taxon>Chordata</taxon>
        <taxon>Craniata</taxon>
        <taxon>Vertebrata</taxon>
        <taxon>Euteleostomi</taxon>
        <taxon>Mammalia</taxon>
        <taxon>Eutheria</taxon>
        <taxon>Euarchontoglires</taxon>
        <taxon>Glires</taxon>
        <taxon>Rodentia</taxon>
        <taxon>Myomorpha</taxon>
        <taxon>Muroidea</taxon>
        <taxon>Muridae</taxon>
        <taxon>Murinae</taxon>
        <taxon>Rattus</taxon>
    </lineage>
</organism>
<gene>
    <name type="primary">Flvcr2</name>
</gene>
<comment type="function">
    <text evidence="1 2">Choline uniporter that specifically mediates choline uptake at the blood-brain-barrier. Responsible for the majority of choline uptake across the blood-brain-barrier from the circulation into the brain (By similarity). Choline, a nutrient critical for brain development, is a precursor of phosphatidylcholine, as well as betaine (By similarity). Also mediates transport of ethanolamine (By similarity). Choline and ethanolamine transport is not coupled with proton transport and is exclusively driven by the choline gradient across the plasma membrane (By similarity). However, the presence of an inwardly directed proton gradient enhances choline uptake (By similarity). Also acts as a heme b transporter (By similarity). Required to regulate mitochondrial respiration processes, ATP synthesis and thermogenesis (By similarity). At low heme levels, interacts with components of electron transfer chain (ETC) complexes and ATP2A2, leading to ubiquitin-mediated degradation of ATP2A2 and inhibition of thermogenesis (By similarity). Upon heme binding, dissociates from ETC complexes to allow switching from mitochondrial ATP synthesis to thermogenesis (By similarity).</text>
</comment>
<comment type="catalytic activity">
    <reaction evidence="1">
        <text>choline(out) = choline(in)</text>
        <dbReference type="Rhea" id="RHEA:32751"/>
        <dbReference type="ChEBI" id="CHEBI:15354"/>
    </reaction>
</comment>
<comment type="catalytic activity">
    <reaction evidence="2">
        <text>ethanolamine(in) = ethanolamine(out)</text>
        <dbReference type="Rhea" id="RHEA:32747"/>
        <dbReference type="ChEBI" id="CHEBI:57603"/>
    </reaction>
</comment>
<comment type="catalytic activity">
    <reaction evidence="2">
        <text>heme b(in) = heme b(out)</text>
        <dbReference type="Rhea" id="RHEA:75443"/>
        <dbReference type="ChEBI" id="CHEBI:60344"/>
    </reaction>
</comment>
<comment type="subunit">
    <text evidence="1">Interacts with components of electron transfer chain complexes III, IV and V including CYC1, NDUFA4, COX4I1, ATP5PD and ATP5F1C; these interactions occur in the absence of heme and are disrupted upon heme binding. Interacts with ATP2A2; this interaction occurs in the absence of heme and promotes ATP2A2 proteasomal degradation; the complex is dissociated upon heme binding. Interacts with HMOX1; this interaction is potentiated in the presence of heme.</text>
</comment>
<comment type="subcellular location">
    <subcellularLocation>
        <location evidence="1">Cell membrane</location>
        <topology evidence="3">Multi-pass membrane protein</topology>
    </subcellularLocation>
    <subcellularLocation>
        <location evidence="1">Mitochondrion membrane</location>
        <topology evidence="3">Multi-pass membrane protein</topology>
    </subcellularLocation>
    <subcellularLocation>
        <location evidence="2">Endoplasmic reticulum membrane</location>
        <topology evidence="3">Multi-pass membrane protein</topology>
    </subcellularLocation>
    <text evidence="1 2">Present on both luminal (blood-facing) and abluminal (brain-facing) sides of brain endothelial cell plasma membranes, with higher luminal membrane expression (By similarity). Also localizes in mitochondria where it interacts with components of the electron transfer complexes III, IV and V. Colocalizes with ATP2A2 at the mitochondrial-ER contact junction (By similarity).</text>
</comment>
<comment type="developmental stage">
    <text evidence="5">Expressed in the retinal pigment epithelial layer at 18 dpc and in blood vessels of the developing retina (at protein level). Expressed in cells lining the fourth ventricle and central canal of the spinal cord at 17 dpc (at protein level).</text>
</comment>
<comment type="domain">
    <text evidence="2">The N-terminus contains histidine-proline motifs involved in heme binding. Can bind 2 to 3 heme molecules.</text>
</comment>
<comment type="similarity">
    <text evidence="6">Belongs to the major facilitator superfamily. Feline leukemia virus subgroup C receptor (TC 2.A.1.28.1) family.</text>
</comment>
<keyword id="KW-1003">Cell membrane</keyword>
<keyword id="KW-0256">Endoplasmic reticulum</keyword>
<keyword id="KW-0472">Membrane</keyword>
<keyword id="KW-0496">Mitochondrion</keyword>
<keyword id="KW-0597">Phosphoprotein</keyword>
<keyword id="KW-1185">Reference proteome</keyword>
<keyword id="KW-0677">Repeat</keyword>
<keyword id="KW-0812">Transmembrane</keyword>
<keyword id="KW-1133">Transmembrane helix</keyword>
<keyword id="KW-0813">Transport</keyword>